<reference key="1">
    <citation type="submission" date="2007-03" db="EMBL/GenBank/DDBJ databases">
        <title>Genome sequence of Rhodospirillum centenum.</title>
        <authorList>
            <person name="Touchman J.W."/>
            <person name="Bauer C."/>
            <person name="Blankenship R.E."/>
        </authorList>
    </citation>
    <scope>NUCLEOTIDE SEQUENCE [LARGE SCALE GENOMIC DNA]</scope>
    <source>
        <strain>ATCC 51521 / SW</strain>
    </source>
</reference>
<organism>
    <name type="scientific">Rhodospirillum centenum (strain ATCC 51521 / SW)</name>
    <dbReference type="NCBI Taxonomy" id="414684"/>
    <lineage>
        <taxon>Bacteria</taxon>
        <taxon>Pseudomonadati</taxon>
        <taxon>Pseudomonadota</taxon>
        <taxon>Alphaproteobacteria</taxon>
        <taxon>Rhodospirillales</taxon>
        <taxon>Rhodospirillaceae</taxon>
        <taxon>Rhodospirillum</taxon>
    </lineage>
</organism>
<dbReference type="EMBL" id="CP000613">
    <property type="protein sequence ID" value="ACI98141.1"/>
    <property type="molecule type" value="Genomic_DNA"/>
</dbReference>
<dbReference type="RefSeq" id="WP_012565932.1">
    <property type="nucleotide sequence ID" value="NC_011420.2"/>
</dbReference>
<dbReference type="SMR" id="B6IRQ5"/>
<dbReference type="STRING" id="414684.RC1_0710"/>
<dbReference type="KEGG" id="rce:RC1_0710"/>
<dbReference type="eggNOG" id="COG0051">
    <property type="taxonomic scope" value="Bacteria"/>
</dbReference>
<dbReference type="HOGENOM" id="CLU_122625_1_3_5"/>
<dbReference type="OrthoDB" id="9804464at2"/>
<dbReference type="Proteomes" id="UP000001591">
    <property type="component" value="Chromosome"/>
</dbReference>
<dbReference type="GO" id="GO:1990904">
    <property type="term" value="C:ribonucleoprotein complex"/>
    <property type="evidence" value="ECO:0007669"/>
    <property type="project" value="UniProtKB-KW"/>
</dbReference>
<dbReference type="GO" id="GO:0005840">
    <property type="term" value="C:ribosome"/>
    <property type="evidence" value="ECO:0007669"/>
    <property type="project" value="UniProtKB-KW"/>
</dbReference>
<dbReference type="GO" id="GO:0003735">
    <property type="term" value="F:structural constituent of ribosome"/>
    <property type="evidence" value="ECO:0007669"/>
    <property type="project" value="InterPro"/>
</dbReference>
<dbReference type="GO" id="GO:0000049">
    <property type="term" value="F:tRNA binding"/>
    <property type="evidence" value="ECO:0007669"/>
    <property type="project" value="UniProtKB-UniRule"/>
</dbReference>
<dbReference type="GO" id="GO:0006412">
    <property type="term" value="P:translation"/>
    <property type="evidence" value="ECO:0007669"/>
    <property type="project" value="UniProtKB-UniRule"/>
</dbReference>
<dbReference type="FunFam" id="3.30.70.600:FF:000001">
    <property type="entry name" value="30S ribosomal protein S10"/>
    <property type="match status" value="1"/>
</dbReference>
<dbReference type="Gene3D" id="3.30.70.600">
    <property type="entry name" value="Ribosomal protein S10 domain"/>
    <property type="match status" value="1"/>
</dbReference>
<dbReference type="HAMAP" id="MF_00508">
    <property type="entry name" value="Ribosomal_uS10"/>
    <property type="match status" value="1"/>
</dbReference>
<dbReference type="InterPro" id="IPR001848">
    <property type="entry name" value="Ribosomal_uS10"/>
</dbReference>
<dbReference type="InterPro" id="IPR018268">
    <property type="entry name" value="Ribosomal_uS10_CS"/>
</dbReference>
<dbReference type="InterPro" id="IPR027486">
    <property type="entry name" value="Ribosomal_uS10_dom"/>
</dbReference>
<dbReference type="InterPro" id="IPR036838">
    <property type="entry name" value="Ribosomal_uS10_dom_sf"/>
</dbReference>
<dbReference type="NCBIfam" id="NF001861">
    <property type="entry name" value="PRK00596.1"/>
    <property type="match status" value="1"/>
</dbReference>
<dbReference type="NCBIfam" id="TIGR01049">
    <property type="entry name" value="rpsJ_bact"/>
    <property type="match status" value="1"/>
</dbReference>
<dbReference type="PANTHER" id="PTHR11700">
    <property type="entry name" value="30S RIBOSOMAL PROTEIN S10 FAMILY MEMBER"/>
    <property type="match status" value="1"/>
</dbReference>
<dbReference type="Pfam" id="PF00338">
    <property type="entry name" value="Ribosomal_S10"/>
    <property type="match status" value="1"/>
</dbReference>
<dbReference type="PRINTS" id="PR00971">
    <property type="entry name" value="RIBOSOMALS10"/>
</dbReference>
<dbReference type="SMART" id="SM01403">
    <property type="entry name" value="Ribosomal_S10"/>
    <property type="match status" value="1"/>
</dbReference>
<dbReference type="SUPFAM" id="SSF54999">
    <property type="entry name" value="Ribosomal protein S10"/>
    <property type="match status" value="1"/>
</dbReference>
<dbReference type="PROSITE" id="PS00361">
    <property type="entry name" value="RIBOSOMAL_S10"/>
    <property type="match status" value="1"/>
</dbReference>
<protein>
    <recommendedName>
        <fullName evidence="1">Small ribosomal subunit protein uS10</fullName>
    </recommendedName>
    <alternativeName>
        <fullName evidence="2">30S ribosomal protein S10</fullName>
    </alternativeName>
</protein>
<sequence>MESQNIRIRLKAFDHRVLDQSTSEIVNTAKRTGARVRGPIPLPTQIEKFTVNRSPHIDKKSREQFEIRTHKRLLDIVDPTPQTVDALMKLDLAAGVDVEIKI</sequence>
<evidence type="ECO:0000255" key="1">
    <source>
        <dbReference type="HAMAP-Rule" id="MF_00508"/>
    </source>
</evidence>
<evidence type="ECO:0000305" key="2"/>
<proteinExistence type="inferred from homology"/>
<feature type="chain" id="PRO_1000127173" description="Small ribosomal subunit protein uS10">
    <location>
        <begin position="1"/>
        <end position="102"/>
    </location>
</feature>
<gene>
    <name evidence="1" type="primary">rpsJ</name>
    <name type="ordered locus">RC1_0710</name>
</gene>
<keyword id="KW-1185">Reference proteome</keyword>
<keyword id="KW-0687">Ribonucleoprotein</keyword>
<keyword id="KW-0689">Ribosomal protein</keyword>
<name>RS10_RHOCS</name>
<accession>B6IRQ5</accession>
<comment type="function">
    <text evidence="1">Involved in the binding of tRNA to the ribosomes.</text>
</comment>
<comment type="subunit">
    <text evidence="1">Part of the 30S ribosomal subunit.</text>
</comment>
<comment type="similarity">
    <text evidence="1">Belongs to the universal ribosomal protein uS10 family.</text>
</comment>